<reference key="1">
    <citation type="journal article" date="2004" name="Genome Res.">
        <title>Genome sequence of Haloarcula marismortui: a halophilic archaeon from the Dead Sea.</title>
        <authorList>
            <person name="Baliga N.S."/>
            <person name="Bonneau R."/>
            <person name="Facciotti M.T."/>
            <person name="Pan M."/>
            <person name="Glusman G."/>
            <person name="Deutsch E.W."/>
            <person name="Shannon P."/>
            <person name="Chiu Y."/>
            <person name="Weng R.S."/>
            <person name="Gan R.R."/>
            <person name="Hung P."/>
            <person name="Date S.V."/>
            <person name="Marcotte E."/>
            <person name="Hood L."/>
            <person name="Ng W.V."/>
        </authorList>
    </citation>
    <scope>NUCLEOTIDE SEQUENCE [LARGE SCALE GENOMIC DNA]</scope>
    <source>
        <strain>ATCC 43049 / DSM 3752 / JCM 8966 / VKM B-1809</strain>
        <plasmid>pNG500</plasmid>
    </source>
</reference>
<reference key="2">
    <citation type="journal article" date="2011" name="Mol. Microbiol.">
        <title>Different routes to the same ending: comparing the N-glycosylation processes of Haloferax volcanii and Haloarcula marismortui, two halophilic archaea from the Dead Sea.</title>
        <authorList>
            <person name="Calo D."/>
            <person name="Guan Z."/>
            <person name="Naparstek S."/>
            <person name="Eichler J."/>
        </authorList>
    </citation>
    <scope>GLYCOSYLATION AT ASN-455</scope>
</reference>
<proteinExistence type="evidence at protein level"/>
<keyword id="KW-1003">Cell membrane</keyword>
<keyword id="KW-0134">Cell wall</keyword>
<keyword id="KW-0961">Cell wall biogenesis/degradation</keyword>
<keyword id="KW-0325">Glycoprotein</keyword>
<keyword id="KW-0472">Membrane</keyword>
<keyword id="KW-0614">Plasmid</keyword>
<keyword id="KW-1185">Reference proteome</keyword>
<keyword id="KW-0701">S-layer</keyword>
<keyword id="KW-0964">Secreted</keyword>
<keyword id="KW-0732">Signal</keyword>
<keyword id="KW-0812">Transmembrane</keyword>
<keyword id="KW-1133">Transmembrane helix</keyword>
<geneLocation type="plasmid">
    <name>pNG500</name>
</geneLocation>
<name>CSG_HALMA</name>
<protein>
    <recommendedName>
        <fullName>Cell surface glycoprotein</fullName>
    </recommendedName>
    <alternativeName>
        <fullName>S-layer glycoprotein</fullName>
    </alternativeName>
</protein>
<gene>
    <name type="primary">csg1</name>
    <name type="ordered locus">pNG5138</name>
</gene>
<evidence type="ECO:0000250" key="1">
    <source>
        <dbReference type="UniProtKB" id="P25062"/>
    </source>
</evidence>
<evidence type="ECO:0000255" key="2"/>
<evidence type="ECO:0000255" key="3">
    <source>
        <dbReference type="PROSITE-ProRule" id="PRU00498"/>
    </source>
</evidence>
<evidence type="ECO:0000256" key="4">
    <source>
        <dbReference type="SAM" id="MobiDB-lite"/>
    </source>
</evidence>
<evidence type="ECO:0000269" key="5">
    <source>
    </source>
</evidence>
<evidence type="ECO:0000305" key="6"/>
<comment type="function">
    <text evidence="1">S-layer protein. The S-layer is a paracrystalline mono-layered assembly of proteins which coat the surface of the cell.</text>
</comment>
<comment type="subcellular location">
    <subcellularLocation>
        <location evidence="1">Secreted</location>
        <location evidence="1">Cell wall</location>
        <location evidence="1">S-layer</location>
    </subcellularLocation>
    <subcellularLocation>
        <location evidence="1">Cell membrane</location>
    </subcellularLocation>
</comment>
<comment type="PTM">
    <text evidence="5">Asn-455 is glycosylated by a pentasaccharide comprising a hexose, 2 hexuronic acids, a methyl ester of a hexuronic acid and a final hexose. The complete pentasaccharide is first assembled on dolichol phosphate and then transferred the glycan to the target Asn.</text>
</comment>
<comment type="PTM">
    <text evidence="1">Cleaved by the archaeosortase ArtA at the C-terminus, with removal of a short hydrophobic segment.</text>
</comment>
<comment type="PTM">
    <text evidence="1">Lipidation.</text>
</comment>
<comment type="similarity">
    <text evidence="6">Belongs to the halobacterial S-layer protein family.</text>
</comment>
<comment type="sequence caution" evidence="6">
    <conflict type="erroneous initiation">
        <sequence resource="EMBL-CDS" id="AAV44550"/>
    </conflict>
    <text>Extended N-terminus.</text>
</comment>
<sequence length="875" mass="91013">MTNTKQKINAVFLSALMVMSVFAAAVAFSGAAAAANRGAGFTYSTGPTDSNGGGNGDSVGQVGPGAVVFQGEEDLEDGGNFGSNTDIGQLQKVSGDNSGILLGNPIPQDQPTGSYTFDGNSGTDGVTLQTPRVTSVEVQNGGSGDVTGSTLQTSSSGPDAFVRADYNFQEAEDLEITVEDENGLEVTNEIVVQKTGLPTADRNNDNGASGSNGDFDVGWELDTTDIDEGQYTITVEGTEDLTFGDASETVTVNITSDQQASLNLDNDEVVQGENLQFNVENSPEGNYHVVLVESSEFRDGITADQASRIFRNVGDVQEVGLVDNTGPVSASTVASNVGSDQEVADVTRYAYGVVEIDGGSGVGSIETQFLDDSSVDVELYPASDSSNDGYASGGSHASSVTVRDTDGDGTDDSEDAIVTDLLETDDDQSFDVVEGEITLDSPSGAYITGSQIDVNGTANQGVDQVALYARDNNDYELIEIDGSNTVSVDGDDTFSEEDVVLSQGSKGGNSIVSLPGSYRIGVIDVQDADLDSDGTVDDTLTTSDFNSGVSGATALRVTDTALNGTFTTYNGQIASDDGQIDVDGQAPGKDNVIVAFVDSRGNAAAQVVSVDDDDSFSEEDIDITSLSEGTVTAHILSSGRDGEYGDTGTSSDSAFVNTIETGYAGGSSTGDQVREQILANTVDDTASDDLIVNEQFRLTDGLTTIESVSSPVEANGTLEVQGNTNRVPDDNTITVEILNSEDESVTVESTDEWGSDGQWSVNVDLSDVDIEPGNYTVEADDGDNTDRTSVTVVEAGSLEEEQPDTETPEPDTETPEPDTETPEPDTETPEPDTETPEPDTETEEATTEASGPGFTAAIALIALVAAALLAVRRDN</sequence>
<dbReference type="EMBL" id="AY596294">
    <property type="protein sequence ID" value="AAV44550.1"/>
    <property type="status" value="ALT_INIT"/>
    <property type="molecule type" value="Genomic_DNA"/>
</dbReference>
<dbReference type="SMR" id="Q5V7F4"/>
<dbReference type="STRING" id="272569.rrnAC1408"/>
<dbReference type="GlyCosmos" id="Q5V7F4">
    <property type="glycosylation" value="5 sites, No reported glycans"/>
</dbReference>
<dbReference type="iPTMnet" id="Q5V7F4"/>
<dbReference type="PaxDb" id="272569-rrnAC1408"/>
<dbReference type="EnsemblBacteria" id="AAV44550">
    <property type="protein sequence ID" value="AAV44550"/>
    <property type="gene ID" value="pNG5138"/>
</dbReference>
<dbReference type="KEGG" id="hma:pNG5138"/>
<dbReference type="PATRIC" id="fig|272569.17.peg.290"/>
<dbReference type="HOGENOM" id="CLU_015552_0_0_2"/>
<dbReference type="Proteomes" id="UP000001169">
    <property type="component" value="Plasmid pNG500"/>
</dbReference>
<dbReference type="GO" id="GO:0005576">
    <property type="term" value="C:extracellular region"/>
    <property type="evidence" value="ECO:0007669"/>
    <property type="project" value="UniProtKB-KW"/>
</dbReference>
<dbReference type="GO" id="GO:0005886">
    <property type="term" value="C:plasma membrane"/>
    <property type="evidence" value="ECO:0007669"/>
    <property type="project" value="UniProtKB-SubCell"/>
</dbReference>
<dbReference type="GO" id="GO:0030115">
    <property type="term" value="C:S-layer"/>
    <property type="evidence" value="ECO:0007669"/>
    <property type="project" value="UniProtKB-SubCell"/>
</dbReference>
<dbReference type="GO" id="GO:0071555">
    <property type="term" value="P:cell wall organization"/>
    <property type="evidence" value="ECO:0007669"/>
    <property type="project" value="UniProtKB-KW"/>
</dbReference>
<dbReference type="InterPro" id="IPR026458">
    <property type="entry name" value="Csg_halobact"/>
</dbReference>
<dbReference type="InterPro" id="IPR026371">
    <property type="entry name" value="PGF_CTERM"/>
</dbReference>
<dbReference type="InterPro" id="IPR026452">
    <property type="entry name" value="Surf_glycop_sig_pep"/>
</dbReference>
<dbReference type="NCBIfam" id="TIGR04207">
    <property type="entry name" value="halo_sig_pep"/>
    <property type="match status" value="1"/>
</dbReference>
<dbReference type="NCBIfam" id="TIGR04216">
    <property type="entry name" value="halo_surf_glyco"/>
    <property type="match status" value="1"/>
</dbReference>
<dbReference type="NCBIfam" id="TIGR04126">
    <property type="entry name" value="PGF_CTERM"/>
    <property type="match status" value="1"/>
</dbReference>
<dbReference type="Pfam" id="PF18204">
    <property type="entry name" value="PGF-CTERM"/>
    <property type="match status" value="1"/>
</dbReference>
<feature type="signal peptide" evidence="2">
    <location>
        <begin position="1"/>
        <end position="23"/>
    </location>
</feature>
<feature type="chain" id="PRO_0000428762" description="Cell surface glycoprotein">
    <location>
        <begin position="24"/>
        <end status="unknown"/>
    </location>
</feature>
<feature type="propeptide" id="PRO_0000444304" description="Removed by archaeosortase" evidence="1">
    <location>
        <begin status="unknown"/>
        <end position="875"/>
    </location>
</feature>
<feature type="transmembrane region" description="Helical" evidence="2">
    <location>
        <begin position="851"/>
        <end position="875"/>
    </location>
</feature>
<feature type="region of interest" description="Disordered" evidence="4">
    <location>
        <begin position="137"/>
        <end position="158"/>
    </location>
</feature>
<feature type="region of interest" description="Disordered" evidence="4">
    <location>
        <begin position="197"/>
        <end position="217"/>
    </location>
</feature>
<feature type="region of interest" description="Disordered" evidence="4">
    <location>
        <begin position="380"/>
        <end position="414"/>
    </location>
</feature>
<feature type="region of interest" description="Disordered" evidence="4">
    <location>
        <begin position="794"/>
        <end position="852"/>
    </location>
</feature>
<feature type="short sequence motif" description="PGF sorting signal" evidence="1">
    <location>
        <begin position="852"/>
        <end position="854"/>
    </location>
</feature>
<feature type="compositionally biased region" description="Polar residues" evidence="4">
    <location>
        <begin position="137"/>
        <end position="157"/>
    </location>
</feature>
<feature type="compositionally biased region" description="Low complexity" evidence="4">
    <location>
        <begin position="205"/>
        <end position="216"/>
    </location>
</feature>
<feature type="compositionally biased region" description="Polar residues" evidence="4">
    <location>
        <begin position="383"/>
        <end position="402"/>
    </location>
</feature>
<feature type="compositionally biased region" description="Acidic residues" evidence="4">
    <location>
        <begin position="797"/>
        <end position="846"/>
    </location>
</feature>
<feature type="glycosylation site" description="N-linked (GlcNAc...) asparagine" evidence="3">
    <location>
        <position position="253"/>
    </location>
</feature>
<feature type="glycosylation site" description="N-linked (GlcNAc...) asparagine" evidence="5">
    <location>
        <position position="455"/>
    </location>
</feature>
<feature type="glycosylation site" description="N-linked (GlcNAc...) asparagine" evidence="3">
    <location>
        <position position="563"/>
    </location>
</feature>
<feature type="glycosylation site" description="N-linked (GlcNAc...) asparagine" evidence="3">
    <location>
        <position position="715"/>
    </location>
</feature>
<feature type="glycosylation site" description="N-linked (GlcNAc...) asparagine" evidence="3">
    <location>
        <position position="774"/>
    </location>
</feature>
<accession>Q5V7F4</accession>
<organism>
    <name type="scientific">Haloarcula marismortui (strain ATCC 43049 / DSM 3752 / JCM 8966 / VKM B-1809)</name>
    <name type="common">Halobacterium marismortui</name>
    <dbReference type="NCBI Taxonomy" id="272569"/>
    <lineage>
        <taxon>Archaea</taxon>
        <taxon>Methanobacteriati</taxon>
        <taxon>Methanobacteriota</taxon>
        <taxon>Stenosarchaea group</taxon>
        <taxon>Halobacteria</taxon>
        <taxon>Halobacteriales</taxon>
        <taxon>Haloarculaceae</taxon>
        <taxon>Haloarcula</taxon>
    </lineage>
</organism>